<name>INT6B_XENLA</name>
<accession>Q5U4W6</accession>
<sequence>MPILLFLLDTSASMNQRSHLGTTYLDIAKGAVETFMKLRSRDPASRGDRYMLVTLEELPYGIKAGWKENHATFMNELKNLQAVGLTTLGQSLRTAFDLLNLNRLVTGIDNYGQGRNPFFLEPSIIVAITDGSKLTTANGVQDELHLPLNSPLPGSELTKEPFRWDQRLFALVLRLPGATAVEQEQPTAVQFDESPITAMCDVTGGRSYSVTSQRILNQCLESLVQKIQSGVVINFEKSGPDPPILEDGLTDPVRSVGSQPWHSCHKLIYVRPNPKTGVPIGHWPIPESFWPDQNSPTLPPRTSHPVVKFSCTDSEPLVIDKLPFDKYELEPSPLTQFILERKSPHTCWPVFVPNSAKYCELGHPFGYLKASTALNCVNLFVLPYNYPVLLPLLDDLFKMHKNKPPLKWRQPFENYLKTMPPYYIGPLKKALRMMGTPNLMPDSMEYGLSYSVVSYLKKLSQQAKVESDRVIGSIGKKYPQETSIKVRSGSNALSLALRKDFKQLLQEITGEVPQRPMDLNMKEFAGFQIALLNKDIKPQTFRNAYDIPRTNLLDHLTRMRANLLKSTRQFLKGQDEDQAHSIPIVQMGNYQEYLKHIPSPLRELDYDQPRRLHTFGNPFKLDKKGMMIDEADEFVSGNQNKLKRTGEPNMQGVPKRRRCMSPLLHSRPQSPSVINNHISGKDSPVSVNQVLCDLPKPVAVHKNTDMSNNVAINEATENHVADHLCDDLLITKSESFGTLPNAALEASESYAAGGDSNFSPNDTSDVLLDKTRESGDTESCLLNNNTAFVHRKRRLHQCRSYEEANIELKAQILKEIRKPGRKYGIIFTLLKDVQGDLQTRLLFLQHVIKEATRFKKRMLIEQLEGFLEEIHRRTNQVNHLSSC</sequence>
<comment type="function">
    <text evidence="1">Component of the integrator complex, a multiprotein complex that terminates RNA polymerase II (Pol II) transcription in the promoter-proximal region of genes. The integrator complex provides a quality checkpoint during transcription elongation by driving premature transcription termination of transcripts that are unfavorably configured for transcriptional elongation: the complex terminates transcription by (1) catalyzing dephosphorylation of the C-terminal domain (CTD) of Pol II subunit POLR2A/RPB1 and SUPT5H/SPT5, (2) degrading the exiting nascent RNA transcript via endonuclease activity and (3) promoting the release of Pol II from bound DNA. The integrator complex is also involved in terminating the synthesis of non-coding Pol II transcripts, such as enhancer RNAs (eRNAs), small nuclear RNAs (snRNAs), telomerase RNAs and long non-coding RNAs (lncRNAs). Within the integrator complex, INTS6 acts as a molecular adapter that promotes assembly of protein phosphatase 2A (PP2A) subunits to the integrator core complex, promoting recruitment of PP2A to transcription pause-release checkpoint.</text>
</comment>
<comment type="subunit">
    <text evidence="1">Component of the Integrator complex, composed of core subunits INTS1, INTS2, INTS3, INTS4, INTS5, INTS6, INTS7, INTS8, INTS9/RC74, INTS10, INTS11/CPSF3L, INTS12, INTS13, INTS14 and INTS15. The core complex associates with protein phosphatase 2A subunits PPP2CA and PPP2R1A, to form the Integrator-PP2A (INTAC) complex.</text>
</comment>
<comment type="subcellular location">
    <subcellularLocation>
        <location evidence="1">Nucleus</location>
    </subcellularLocation>
    <subcellularLocation>
        <location evidence="1">Chromosome</location>
    </subcellularLocation>
    <text evidence="1">Associates with chromatin and transcription pause-release checkpoint.</text>
</comment>
<comment type="domain">
    <text evidence="1">The inhibitory loop acts as a regulator of protein phosphatase 2A (PP2A) activity: Asp-629 and Glu-630 residues mimic phosphoserine and phosphothreonine residues and bind to the PP2A catalytic subunit PPP2CA active site to block substrate-binding.</text>
</comment>
<comment type="similarity">
    <text evidence="3">Belongs to the Integrator subunit 6 family.</text>
</comment>
<feature type="chain" id="PRO_0000259547" description="Integrator complex subunit 6-B">
    <location>
        <begin position="1"/>
        <end position="883"/>
    </location>
</feature>
<feature type="domain" description="VWFA" evidence="2">
    <location>
        <begin position="3"/>
        <end position="227"/>
    </location>
</feature>
<feature type="short sequence motif" description="Inhibitory loop" evidence="1">
    <location>
        <begin position="626"/>
        <end position="633"/>
    </location>
</feature>
<reference key="1">
    <citation type="submission" date="2004-10" db="EMBL/GenBank/DDBJ databases">
        <authorList>
            <consortium name="NIH - Xenopus Gene Collection (XGC) project"/>
        </authorList>
    </citation>
    <scope>NUCLEOTIDE SEQUENCE [LARGE SCALE MRNA]</scope>
    <source>
        <tissue>Embryo</tissue>
    </source>
</reference>
<proteinExistence type="evidence at transcript level"/>
<gene>
    <name type="primary">ints6-b</name>
</gene>
<protein>
    <recommendedName>
        <fullName>Integrator complex subunit 6-B</fullName>
        <shortName>Int6-B</shortName>
    </recommendedName>
</protein>
<evidence type="ECO:0000250" key="1">
    <source>
        <dbReference type="UniProtKB" id="Q9UL03"/>
    </source>
</evidence>
<evidence type="ECO:0000255" key="2">
    <source>
        <dbReference type="PROSITE-ProRule" id="PRU00219"/>
    </source>
</evidence>
<evidence type="ECO:0000305" key="3"/>
<dbReference type="EMBL" id="BC084927">
    <property type="protein sequence ID" value="AAH84927.1"/>
    <property type="molecule type" value="mRNA"/>
</dbReference>
<dbReference type="SMR" id="Q5U4W6"/>
<dbReference type="GeneID" id="495417"/>
<dbReference type="KEGG" id="xla:495417"/>
<dbReference type="AGR" id="Xenbase:XB-GENE-967193"/>
<dbReference type="CTD" id="495417"/>
<dbReference type="Xenbase" id="XB-GENE-967193">
    <property type="gene designation" value="ints6.S"/>
</dbReference>
<dbReference type="OrthoDB" id="9449012at2759"/>
<dbReference type="Proteomes" id="UP000186698">
    <property type="component" value="Chromosome 2S"/>
</dbReference>
<dbReference type="Bgee" id="495417">
    <property type="expression patterns" value="Expressed in blastula and 19 other cell types or tissues"/>
</dbReference>
<dbReference type="GO" id="GO:0000785">
    <property type="term" value="C:chromatin"/>
    <property type="evidence" value="ECO:0000250"/>
    <property type="project" value="UniProtKB"/>
</dbReference>
<dbReference type="GO" id="GO:0160232">
    <property type="term" value="C:INTAC complex"/>
    <property type="evidence" value="ECO:0000250"/>
    <property type="project" value="UniProtKB"/>
</dbReference>
<dbReference type="GO" id="GO:0032039">
    <property type="term" value="C:integrator complex"/>
    <property type="evidence" value="ECO:0000318"/>
    <property type="project" value="GO_Central"/>
</dbReference>
<dbReference type="GO" id="GO:0005634">
    <property type="term" value="C:nucleus"/>
    <property type="evidence" value="ECO:0000250"/>
    <property type="project" value="UniProtKB"/>
</dbReference>
<dbReference type="GO" id="GO:0030674">
    <property type="term" value="F:protein-macromolecule adaptor activity"/>
    <property type="evidence" value="ECO:0000250"/>
    <property type="project" value="UniProtKB"/>
</dbReference>
<dbReference type="GO" id="GO:0071168">
    <property type="term" value="P:protein localization to chromatin"/>
    <property type="evidence" value="ECO:0000250"/>
    <property type="project" value="UniProtKB"/>
</dbReference>
<dbReference type="GO" id="GO:0160240">
    <property type="term" value="P:RNA polymerase II transcription initiation surveillance"/>
    <property type="evidence" value="ECO:0000250"/>
    <property type="project" value="UniProtKB"/>
</dbReference>
<dbReference type="GO" id="GO:0034472">
    <property type="term" value="P:snRNA 3'-end processing"/>
    <property type="evidence" value="ECO:0000318"/>
    <property type="project" value="GO_Central"/>
</dbReference>
<dbReference type="CDD" id="cd00198">
    <property type="entry name" value="vWFA"/>
    <property type="match status" value="1"/>
</dbReference>
<dbReference type="FunFam" id="3.40.50.410:FF:000010">
    <property type="entry name" value="Integrator complex subunit 6 like"/>
    <property type="match status" value="1"/>
</dbReference>
<dbReference type="Gene3D" id="3.40.50.410">
    <property type="entry name" value="von Willebrand factor, type A domain"/>
    <property type="match status" value="1"/>
</dbReference>
<dbReference type="InterPro" id="IPR029307">
    <property type="entry name" value="INT_SG_DDX_CT_C"/>
</dbReference>
<dbReference type="InterPro" id="IPR051113">
    <property type="entry name" value="Integrator_subunit6"/>
</dbReference>
<dbReference type="InterPro" id="IPR002035">
    <property type="entry name" value="VWF_A"/>
</dbReference>
<dbReference type="InterPro" id="IPR036465">
    <property type="entry name" value="vWFA_dom_sf"/>
</dbReference>
<dbReference type="PANTHER" id="PTHR12957">
    <property type="entry name" value="DEAD/H BOX POLYPEPTIDE 26/DICE1-RELATED"/>
    <property type="match status" value="1"/>
</dbReference>
<dbReference type="PANTHER" id="PTHR12957:SF23">
    <property type="entry name" value="INTEGRATOR COMPLEX SUBUNIT 6"/>
    <property type="match status" value="1"/>
</dbReference>
<dbReference type="Pfam" id="PF25462">
    <property type="entry name" value="Beta-barrel_INTS6"/>
    <property type="match status" value="1"/>
</dbReference>
<dbReference type="Pfam" id="PF15300">
    <property type="entry name" value="INT_SG_DDX_CT_C"/>
    <property type="match status" value="1"/>
</dbReference>
<dbReference type="Pfam" id="PF13519">
    <property type="entry name" value="VWA_2"/>
    <property type="match status" value="1"/>
</dbReference>
<dbReference type="SUPFAM" id="SSF53300">
    <property type="entry name" value="vWA-like"/>
    <property type="match status" value="1"/>
</dbReference>
<dbReference type="PROSITE" id="PS50234">
    <property type="entry name" value="VWFA"/>
    <property type="match status" value="1"/>
</dbReference>
<organism>
    <name type="scientific">Xenopus laevis</name>
    <name type="common">African clawed frog</name>
    <dbReference type="NCBI Taxonomy" id="8355"/>
    <lineage>
        <taxon>Eukaryota</taxon>
        <taxon>Metazoa</taxon>
        <taxon>Chordata</taxon>
        <taxon>Craniata</taxon>
        <taxon>Vertebrata</taxon>
        <taxon>Euteleostomi</taxon>
        <taxon>Amphibia</taxon>
        <taxon>Batrachia</taxon>
        <taxon>Anura</taxon>
        <taxon>Pipoidea</taxon>
        <taxon>Pipidae</taxon>
        <taxon>Xenopodinae</taxon>
        <taxon>Xenopus</taxon>
        <taxon>Xenopus</taxon>
    </lineage>
</organism>
<keyword id="KW-0158">Chromosome</keyword>
<keyword id="KW-0539">Nucleus</keyword>
<keyword id="KW-1185">Reference proteome</keyword>